<name>RMI1_ORYSJ</name>
<protein>
    <recommendedName>
        <fullName>RecQ-mediated genome instability protein 1</fullName>
    </recommendedName>
    <alternativeName>
        <fullName>BLM-associated protein of 75 kDa homolog</fullName>
        <shortName>BLAP75</shortName>
    </alternativeName>
</protein>
<comment type="function">
    <text evidence="1">Essential component of the RMI complex, a complex that plays an important role in the resolution step of homologous recombination, in a process called Holliday Junction dissolution, to limit DNA crossover formation in cells.</text>
</comment>
<comment type="subunit">
    <text evidence="1">Component of the RMI complex, containing at least TOP3A and RMI1.</text>
</comment>
<comment type="similarity">
    <text evidence="3">Belongs to the RMI1 family.</text>
</comment>
<keyword id="KW-1185">Reference proteome</keyword>
<feature type="chain" id="PRO_0000429783" description="RecQ-mediated genome instability protein 1">
    <location>
        <begin position="1"/>
        <end position="817"/>
    </location>
</feature>
<feature type="region of interest" description="Disordered" evidence="2">
    <location>
        <begin position="1"/>
        <end position="203"/>
    </location>
</feature>
<feature type="region of interest" description="Disordered" evidence="2">
    <location>
        <begin position="595"/>
        <end position="639"/>
    </location>
</feature>
<feature type="compositionally biased region" description="Low complexity" evidence="2">
    <location>
        <begin position="24"/>
        <end position="41"/>
    </location>
</feature>
<feature type="compositionally biased region" description="Acidic residues" evidence="2">
    <location>
        <begin position="77"/>
        <end position="115"/>
    </location>
</feature>
<feature type="compositionally biased region" description="Pro residues" evidence="2">
    <location>
        <begin position="126"/>
        <end position="157"/>
    </location>
</feature>
<feature type="compositionally biased region" description="Pro residues" evidence="2">
    <location>
        <begin position="165"/>
        <end position="175"/>
    </location>
</feature>
<feature type="compositionally biased region" description="Pro residues" evidence="2">
    <location>
        <begin position="184"/>
        <end position="196"/>
    </location>
</feature>
<feature type="compositionally biased region" description="Polar residues" evidence="2">
    <location>
        <begin position="625"/>
        <end position="638"/>
    </location>
</feature>
<proteinExistence type="inferred from homology"/>
<gene>
    <name type="primary">RMI1</name>
    <name type="ordered locus">Os04g0391000</name>
    <name type="ORF">OSJNBa0055C08.4</name>
</gene>
<evidence type="ECO:0000250" key="1"/>
<evidence type="ECO:0000256" key="2">
    <source>
        <dbReference type="SAM" id="MobiDB-lite"/>
    </source>
</evidence>
<evidence type="ECO:0000305" key="3"/>
<reference key="1">
    <citation type="journal article" date="2002" name="Nature">
        <title>Sequence and analysis of rice chromosome 4.</title>
        <authorList>
            <person name="Feng Q."/>
            <person name="Zhang Y."/>
            <person name="Hao P."/>
            <person name="Wang S."/>
            <person name="Fu G."/>
            <person name="Huang Y."/>
            <person name="Li Y."/>
            <person name="Zhu J."/>
            <person name="Liu Y."/>
            <person name="Hu X."/>
            <person name="Jia P."/>
            <person name="Zhang Y."/>
            <person name="Zhao Q."/>
            <person name="Ying K."/>
            <person name="Yu S."/>
            <person name="Tang Y."/>
            <person name="Weng Q."/>
            <person name="Zhang L."/>
            <person name="Lu Y."/>
            <person name="Mu J."/>
            <person name="Lu Y."/>
            <person name="Zhang L.S."/>
            <person name="Yu Z."/>
            <person name="Fan D."/>
            <person name="Liu X."/>
            <person name="Lu T."/>
            <person name="Li C."/>
            <person name="Wu Y."/>
            <person name="Sun T."/>
            <person name="Lei H."/>
            <person name="Li T."/>
            <person name="Hu H."/>
            <person name="Guan J."/>
            <person name="Wu M."/>
            <person name="Zhang R."/>
            <person name="Zhou B."/>
            <person name="Chen Z."/>
            <person name="Chen L."/>
            <person name="Jin Z."/>
            <person name="Wang R."/>
            <person name="Yin H."/>
            <person name="Cai Z."/>
            <person name="Ren S."/>
            <person name="Lv G."/>
            <person name="Gu W."/>
            <person name="Zhu G."/>
            <person name="Tu Y."/>
            <person name="Jia J."/>
            <person name="Zhang Y."/>
            <person name="Chen J."/>
            <person name="Kang H."/>
            <person name="Chen X."/>
            <person name="Shao C."/>
            <person name="Sun Y."/>
            <person name="Hu Q."/>
            <person name="Zhang X."/>
            <person name="Zhang W."/>
            <person name="Wang L."/>
            <person name="Ding C."/>
            <person name="Sheng H."/>
            <person name="Gu J."/>
            <person name="Chen S."/>
            <person name="Ni L."/>
            <person name="Zhu F."/>
            <person name="Chen W."/>
            <person name="Lan L."/>
            <person name="Lai Y."/>
            <person name="Cheng Z."/>
            <person name="Gu M."/>
            <person name="Jiang J."/>
            <person name="Li J."/>
            <person name="Hong G."/>
            <person name="Xue Y."/>
            <person name="Han B."/>
        </authorList>
    </citation>
    <scope>NUCLEOTIDE SEQUENCE [LARGE SCALE GENOMIC DNA]</scope>
    <source>
        <strain>cv. Nipponbare</strain>
    </source>
</reference>
<reference key="2">
    <citation type="journal article" date="2005" name="Nature">
        <title>The map-based sequence of the rice genome.</title>
        <authorList>
            <consortium name="International rice genome sequencing project (IRGSP)"/>
        </authorList>
    </citation>
    <scope>NUCLEOTIDE SEQUENCE [LARGE SCALE GENOMIC DNA]</scope>
    <source>
        <strain>cv. Nipponbare</strain>
    </source>
</reference>
<reference key="3">
    <citation type="journal article" date="2008" name="Nucleic Acids Res.">
        <title>The rice annotation project database (RAP-DB): 2008 update.</title>
        <authorList>
            <consortium name="The rice annotation project (RAP)"/>
        </authorList>
    </citation>
    <scope>GENOME REANNOTATION</scope>
    <source>
        <strain>cv. Nipponbare</strain>
    </source>
</reference>
<reference key="4">
    <citation type="journal article" date="2013" name="Rice">
        <title>Improvement of the Oryza sativa Nipponbare reference genome using next generation sequence and optical map data.</title>
        <authorList>
            <person name="Kawahara Y."/>
            <person name="de la Bastide M."/>
            <person name="Hamilton J.P."/>
            <person name="Kanamori H."/>
            <person name="McCombie W.R."/>
            <person name="Ouyang S."/>
            <person name="Schwartz D.C."/>
            <person name="Tanaka T."/>
            <person name="Wu J."/>
            <person name="Zhou S."/>
            <person name="Childs K.L."/>
            <person name="Davidson R.M."/>
            <person name="Lin H."/>
            <person name="Quesada-Ocampo L."/>
            <person name="Vaillancourt B."/>
            <person name="Sakai H."/>
            <person name="Lee S.S."/>
            <person name="Kim J."/>
            <person name="Numa H."/>
            <person name="Itoh T."/>
            <person name="Buell C.R."/>
            <person name="Matsumoto T."/>
        </authorList>
    </citation>
    <scope>GENOME REANNOTATION</scope>
    <source>
        <strain>cv. Nipponbare</strain>
    </source>
</reference>
<sequence>MRRRNLIITSDSDSDDGGGGGGAATASTPASASASASFPSVSGGGCGDGWPSPQNPRSVPVQFPSPSSPPPSPPIEISDEEEAEAEVVVEEEEVVVVEDEEEEYEEVEEIEDPDGDSPFVDAPEHISPPPPPPPPARTPMPTPTPTPTPTPTRPPVPVWAAPLPARTPTPTPSAPPRAAAPSPAGTPSPSPIPPSSTPVSALSGPLRQVDEFLRGLGLRLRPEWLESCAAGVPGFYGLGGVEAMARRCFEQFLFADMNACGAGVLPEGVGSMHNAVLDGPLVLQVDEIVNLSAPLRERYRDAHAGPKRCLKLSMTDGIQRIYGMEYRPIKDLEVLAPAGFKIVIRNVHIRRGLFMLVPEVIEILGGVDDELDEARNRLVSEVNKPPRGKRKQGGLPLSSRATLAAWPTNANATNDAEQGASVPRTVNTPHPTRLGNASHASQVGRTTQPMVDNLIPHVVVSNAQEQSRHIQEITMQGQPTSLNRHNKEASASYRYNAQCSISGTTRAMADEHVLVSNAQEQSPHIQEITMQDQSTSLNGRNKEASASTSYRYNAQCSISGTTRAMADERVDPSFVGNNVHEQMQRVQGITMQDHISASSESKRELSVTTPSGYDSRLAPHGVGNTGTRSGEATRSSNVDDGINNIGHPISLCGENEKPFTYIFNMLADWGVQQDTVPYIQGKIKGLITSVKRFQYKQSMQYDLYVYIDDGSFITEAFVDRDIVQNMIGLSAEELAAALSSGGPAQANIRKTMKAFEHFLVNFEGTILIELNRDSSVPIVREMNKGCSSSDAWQLLRRVKTFSGQGYMRSLDFMDTTP</sequence>
<organism>
    <name type="scientific">Oryza sativa subsp. japonica</name>
    <name type="common">Rice</name>
    <dbReference type="NCBI Taxonomy" id="39947"/>
    <lineage>
        <taxon>Eukaryota</taxon>
        <taxon>Viridiplantae</taxon>
        <taxon>Streptophyta</taxon>
        <taxon>Embryophyta</taxon>
        <taxon>Tracheophyta</taxon>
        <taxon>Spermatophyta</taxon>
        <taxon>Magnoliopsida</taxon>
        <taxon>Liliopsida</taxon>
        <taxon>Poales</taxon>
        <taxon>Poaceae</taxon>
        <taxon>BOP clade</taxon>
        <taxon>Oryzoideae</taxon>
        <taxon>Oryzeae</taxon>
        <taxon>Oryzinae</taxon>
        <taxon>Oryza</taxon>
        <taxon>Oryza sativa</taxon>
    </lineage>
</organism>
<dbReference type="EMBL" id="AL731600">
    <property type="protein sequence ID" value="CAE02280.2"/>
    <property type="molecule type" value="Genomic_DNA"/>
</dbReference>
<dbReference type="EMBL" id="AP008210">
    <property type="protein sequence ID" value="BAF14558.2"/>
    <property type="molecule type" value="Genomic_DNA"/>
</dbReference>
<dbReference type="EMBL" id="AP014960">
    <property type="status" value="NOT_ANNOTATED_CDS"/>
    <property type="molecule type" value="Genomic_DNA"/>
</dbReference>
<dbReference type="RefSeq" id="XP_015633696.1">
    <property type="nucleotide sequence ID" value="XM_015778210.1"/>
</dbReference>
<dbReference type="RefSeq" id="XP_015633697.1">
    <property type="nucleotide sequence ID" value="XM_015778211.1"/>
</dbReference>
<dbReference type="RefSeq" id="XP_015633698.1">
    <property type="nucleotide sequence ID" value="XM_015778212.1"/>
</dbReference>
<dbReference type="SMR" id="Q7XRV0"/>
<dbReference type="FunCoup" id="Q7XRV0">
    <property type="interactions" value="27"/>
</dbReference>
<dbReference type="STRING" id="39947.Q7XRV0"/>
<dbReference type="PaxDb" id="39947-Q7XRV0"/>
<dbReference type="GeneID" id="4335680"/>
<dbReference type="KEGG" id="dosa:Os04g0391000"/>
<dbReference type="KEGG" id="osa:4335680"/>
<dbReference type="eggNOG" id="ENOG502QPJ3">
    <property type="taxonomic scope" value="Eukaryota"/>
</dbReference>
<dbReference type="HOGENOM" id="CLU_664610_0_0_1"/>
<dbReference type="InParanoid" id="Q7XRV0"/>
<dbReference type="OrthoDB" id="341511at2759"/>
<dbReference type="Proteomes" id="UP000000763">
    <property type="component" value="Chromosome 4"/>
</dbReference>
<dbReference type="Proteomes" id="UP000059680">
    <property type="component" value="Chromosome 4"/>
</dbReference>
<dbReference type="GO" id="GO:0016604">
    <property type="term" value="C:nuclear body"/>
    <property type="evidence" value="ECO:0000318"/>
    <property type="project" value="GO_Central"/>
</dbReference>
<dbReference type="GO" id="GO:0031422">
    <property type="term" value="C:RecQ family helicase-topoisomerase III complex"/>
    <property type="evidence" value="ECO:0000318"/>
    <property type="project" value="GO_Central"/>
</dbReference>
<dbReference type="GO" id="GO:0000166">
    <property type="term" value="F:nucleotide binding"/>
    <property type="evidence" value="ECO:0007669"/>
    <property type="project" value="InterPro"/>
</dbReference>
<dbReference type="GO" id="GO:0000724">
    <property type="term" value="P:double-strand break repair via homologous recombination"/>
    <property type="evidence" value="ECO:0000318"/>
    <property type="project" value="GO_Central"/>
</dbReference>
<dbReference type="GO" id="GO:0000712">
    <property type="term" value="P:resolution of meiotic recombination intermediates"/>
    <property type="evidence" value="ECO:0000318"/>
    <property type="project" value="GO_Central"/>
</dbReference>
<dbReference type="FunFam" id="2.40.50.770:FF:000004">
    <property type="entry name" value="RecQ-mediated instability protein (DUF1767)"/>
    <property type="match status" value="1"/>
</dbReference>
<dbReference type="Gene3D" id="2.40.50.770">
    <property type="entry name" value="RecQ-mediated genome instability protein Rmi1, C-terminal domain"/>
    <property type="match status" value="1"/>
</dbReference>
<dbReference type="InterPro" id="IPR032199">
    <property type="entry name" value="RMI1_C"/>
</dbReference>
<dbReference type="InterPro" id="IPR042470">
    <property type="entry name" value="RMI1_N_C_sf"/>
</dbReference>
<dbReference type="InterPro" id="IPR013894">
    <property type="entry name" value="RMI1_OB"/>
</dbReference>
<dbReference type="PANTHER" id="PTHR14790:SF15">
    <property type="entry name" value="RECQ-MEDIATED GENOME INSTABILITY PROTEIN 1"/>
    <property type="match status" value="1"/>
</dbReference>
<dbReference type="PANTHER" id="PTHR14790">
    <property type="entry name" value="RECQ-MEDIATED GENOME INSTABILITY PROTEIN 1 RMI1"/>
    <property type="match status" value="1"/>
</dbReference>
<dbReference type="Pfam" id="PF16099">
    <property type="entry name" value="RMI1_C"/>
    <property type="match status" value="1"/>
</dbReference>
<dbReference type="Pfam" id="PF08585">
    <property type="entry name" value="RMI1_N_C"/>
    <property type="match status" value="1"/>
</dbReference>
<dbReference type="SMART" id="SM01161">
    <property type="entry name" value="DUF1767"/>
    <property type="match status" value="1"/>
</dbReference>
<accession>Q7XRV0</accession>
<accession>Q0JDM9</accession>